<reference key="1">
    <citation type="submission" date="2007-09" db="EMBL/GenBank/DDBJ databases">
        <title>Complete sequence of chromosome of Serratia proteamaculans 568.</title>
        <authorList>
            <consortium name="US DOE Joint Genome Institute"/>
            <person name="Copeland A."/>
            <person name="Lucas S."/>
            <person name="Lapidus A."/>
            <person name="Barry K."/>
            <person name="Glavina del Rio T."/>
            <person name="Dalin E."/>
            <person name="Tice H."/>
            <person name="Pitluck S."/>
            <person name="Chain P."/>
            <person name="Malfatti S."/>
            <person name="Shin M."/>
            <person name="Vergez L."/>
            <person name="Schmutz J."/>
            <person name="Larimer F."/>
            <person name="Land M."/>
            <person name="Hauser L."/>
            <person name="Kyrpides N."/>
            <person name="Kim E."/>
            <person name="Taghavi S."/>
            <person name="Newman L."/>
            <person name="Vangronsveld J."/>
            <person name="van der Lelie D."/>
            <person name="Richardson P."/>
        </authorList>
    </citation>
    <scope>NUCLEOTIDE SEQUENCE [LARGE SCALE GENOMIC DNA]</scope>
    <source>
        <strain>568</strain>
    </source>
</reference>
<evidence type="ECO:0000255" key="1">
    <source>
        <dbReference type="HAMAP-Rule" id="MF_00832"/>
    </source>
</evidence>
<organism>
    <name type="scientific">Serratia proteamaculans (strain 568)</name>
    <dbReference type="NCBI Taxonomy" id="399741"/>
    <lineage>
        <taxon>Bacteria</taxon>
        <taxon>Pseudomonadati</taxon>
        <taxon>Pseudomonadota</taxon>
        <taxon>Gammaproteobacteria</taxon>
        <taxon>Enterobacterales</taxon>
        <taxon>Yersiniaceae</taxon>
        <taxon>Serratia</taxon>
    </lineage>
</organism>
<protein>
    <recommendedName>
        <fullName evidence="1">Putative carbamate hydrolase RutD</fullName>
        <ecNumber evidence="1">3.5.1.-</ecNumber>
    </recommendedName>
    <alternativeName>
        <fullName evidence="1">Aminohydrolase</fullName>
    </alternativeName>
</protein>
<proteinExistence type="inferred from homology"/>
<sequence length="267" mass="29550">MYFEILGKDTPLAPTLVLSAGLGGAGSFWQPQINALGEHFRVVVYDHFGTARSKGSVPDGYSMADMADEVAQLLRSLNVDCCYFVGHALGGMIGLQLALTHPQLVEKLVVVNGWPTLDSQTRRCFKVRQDLLLNSGVEAYVRAQPLFLFPADWLSQHSALLDEELQHQTAHFQGTENLLRRLTALMNTDFRPHLADITTPTLALCSRDDLLVPYHCSHQLAASLPNGELAEMAYGGHAMSVTDTEHFNRILLGWLLKTQNAQTRLQP</sequence>
<feature type="chain" id="PRO_0000402980" description="Putative carbamate hydrolase RutD">
    <location>
        <begin position="1"/>
        <end position="267"/>
    </location>
</feature>
<feature type="domain" description="AB hydrolase-1" evidence="1">
    <location>
        <begin position="14"/>
        <end position="115"/>
    </location>
</feature>
<gene>
    <name evidence="1" type="primary">rutD</name>
    <name type="ordered locus">Spro_1820</name>
</gene>
<comment type="function">
    <text evidence="1">Involved in pyrimidine catabolism. May facilitate the hydrolysis of carbamate, a reaction that can also occur spontaneously.</text>
</comment>
<comment type="catalytic activity">
    <reaction evidence="1">
        <text>carbamate + 2 H(+) = NH4(+) + CO2</text>
        <dbReference type="Rhea" id="RHEA:15649"/>
        <dbReference type="ChEBI" id="CHEBI:13941"/>
        <dbReference type="ChEBI" id="CHEBI:15378"/>
        <dbReference type="ChEBI" id="CHEBI:16526"/>
        <dbReference type="ChEBI" id="CHEBI:28938"/>
    </reaction>
</comment>
<comment type="similarity">
    <text evidence="1">Belongs to the AB hydrolase superfamily. Hydrolase RutD family.</text>
</comment>
<dbReference type="EC" id="3.5.1.-" evidence="1"/>
<dbReference type="EMBL" id="CP000826">
    <property type="protein sequence ID" value="ABV40923.1"/>
    <property type="molecule type" value="Genomic_DNA"/>
</dbReference>
<dbReference type="SMR" id="A8GCT3"/>
<dbReference type="STRING" id="399741.Spro_1820"/>
<dbReference type="ESTHER" id="serp5-a8gct3">
    <property type="family name" value="RutD"/>
</dbReference>
<dbReference type="KEGG" id="spe:Spro_1820"/>
<dbReference type="eggNOG" id="COG2267">
    <property type="taxonomic scope" value="Bacteria"/>
</dbReference>
<dbReference type="HOGENOM" id="CLU_020336_50_1_6"/>
<dbReference type="OrthoDB" id="9804723at2"/>
<dbReference type="GO" id="GO:0016811">
    <property type="term" value="F:hydrolase activity, acting on carbon-nitrogen (but not peptide) bonds, in linear amides"/>
    <property type="evidence" value="ECO:0007669"/>
    <property type="project" value="InterPro"/>
</dbReference>
<dbReference type="GO" id="GO:0019740">
    <property type="term" value="P:nitrogen utilization"/>
    <property type="evidence" value="ECO:0007669"/>
    <property type="project" value="UniProtKB-UniRule"/>
</dbReference>
<dbReference type="GO" id="GO:0006212">
    <property type="term" value="P:uracil catabolic process"/>
    <property type="evidence" value="ECO:0007669"/>
    <property type="project" value="UniProtKB-UniRule"/>
</dbReference>
<dbReference type="Gene3D" id="3.40.50.1820">
    <property type="entry name" value="alpha/beta hydrolase"/>
    <property type="match status" value="1"/>
</dbReference>
<dbReference type="HAMAP" id="MF_00832">
    <property type="entry name" value="RutD"/>
    <property type="match status" value="1"/>
</dbReference>
<dbReference type="InterPro" id="IPR050471">
    <property type="entry name" value="AB_hydrolase"/>
</dbReference>
<dbReference type="InterPro" id="IPR000073">
    <property type="entry name" value="AB_hydrolase_1"/>
</dbReference>
<dbReference type="InterPro" id="IPR029058">
    <property type="entry name" value="AB_hydrolase_fold"/>
</dbReference>
<dbReference type="InterPro" id="IPR019913">
    <property type="entry name" value="Pyrimidine_utilisation_RutD"/>
</dbReference>
<dbReference type="NCBIfam" id="TIGR03611">
    <property type="entry name" value="RutD"/>
    <property type="match status" value="1"/>
</dbReference>
<dbReference type="PANTHER" id="PTHR43433:SF5">
    <property type="entry name" value="AB HYDROLASE-1 DOMAIN-CONTAINING PROTEIN"/>
    <property type="match status" value="1"/>
</dbReference>
<dbReference type="PANTHER" id="PTHR43433">
    <property type="entry name" value="HYDROLASE, ALPHA/BETA FOLD FAMILY PROTEIN"/>
    <property type="match status" value="1"/>
</dbReference>
<dbReference type="Pfam" id="PF00561">
    <property type="entry name" value="Abhydrolase_1"/>
    <property type="match status" value="1"/>
</dbReference>
<dbReference type="PRINTS" id="PR00111">
    <property type="entry name" value="ABHYDROLASE"/>
</dbReference>
<dbReference type="SUPFAM" id="SSF53474">
    <property type="entry name" value="alpha/beta-Hydrolases"/>
    <property type="match status" value="1"/>
</dbReference>
<keyword id="KW-0378">Hydrolase</keyword>
<name>RUTD_SERP5</name>
<accession>A8GCT3</accession>